<proteinExistence type="inferred from homology"/>
<sequence length="367" mass="41786">MGSGYQLLQLPRERFRKTSFLVWVIILFQRAISMPLGIVTNSTLKATEIDQLVCRDKLSSTSQLKSVGLNLEGNGIATDVPSATKRWGFRSGVPPKVVSYEAGEWAENCYNLEIKKSDGSECLPLPPDGVRGFPRCRYVHKVQGTGPCPGDLAFHKNGAFFLYDRLASTVIYRGTTFAEGVIAFLILSEPKKHFWKATPAHEPVNTTDDSTSYYMTLTLSYEMSNFGGEESNTLFKVDNHTYVQLDRPHTPQFLVQLNETLRRNNRLSNSTGRLTWTVDPKIEPDVGEWAFWETKKTFPNNFMEKTCISKFYQPTPTTPQIRARRELSKEKLATTHPPTTPSWFQRIPLQWFQCSLQDGQRKCRPKV</sequence>
<accession>Q91DD7</accession>
<keyword id="KW-0165">Cleavage on pair of basic residues</keyword>
<keyword id="KW-1015">Disulfide bond</keyword>
<keyword id="KW-0325">Glycoprotein</keyword>
<keyword id="KW-0407">Ion channel</keyword>
<keyword id="KW-0406">Ion transport</keyword>
<keyword id="KW-0691">RNA editing</keyword>
<keyword id="KW-0964">Secreted</keyword>
<keyword id="KW-0732">Signal</keyword>
<keyword id="KW-0813">Transport</keyword>
<keyword id="KW-1182">Viral ion channel</keyword>
<organism>
    <name type="scientific">Reston ebolavirus (strain Philippines-96)</name>
    <name type="common">REBOV</name>
    <name type="synonym">Reston Ebola virus</name>
    <dbReference type="NCBI Taxonomy" id="129003"/>
    <lineage>
        <taxon>Viruses</taxon>
        <taxon>Riboviria</taxon>
        <taxon>Orthornavirae</taxon>
        <taxon>Negarnaviricota</taxon>
        <taxon>Haploviricotina</taxon>
        <taxon>Monjiviricetes</taxon>
        <taxon>Mononegavirales</taxon>
        <taxon>Filoviridae</taxon>
        <taxon>Orthoebolavirus</taxon>
        <taxon>Orthoebolavirus restonense</taxon>
        <taxon>Reston ebolavirus</taxon>
    </lineage>
</organism>
<feature type="signal peptide" evidence="3">
    <location>
        <begin position="1"/>
        <end position="33"/>
    </location>
</feature>
<feature type="chain" id="PRO_0000245084" description="Pre-small/secreted glycoprotein" evidence="1">
    <location>
        <begin position="34"/>
        <end position="367"/>
    </location>
</feature>
<feature type="chain" id="PRO_0000245085" description="Small/secreted glycoprotein" evidence="1">
    <location>
        <begin position="34"/>
        <end position="325"/>
    </location>
</feature>
<feature type="chain" id="PRO_0000245086" description="Delta-peptide" evidence="1">
    <location>
        <begin position="326"/>
        <end position="367"/>
    </location>
</feature>
<feature type="site" description="Cleavage; by host furin" evidence="1">
    <location>
        <begin position="325"/>
        <end position="326"/>
    </location>
</feature>
<feature type="glycosylation site" description="N-linked (GlcNAc...) asparagine; by host" evidence="3">
    <location>
        <position position="41"/>
    </location>
</feature>
<feature type="glycosylation site" description="N-linked (GlcNAc...) asparagine; by host" evidence="3">
    <location>
        <position position="205"/>
    </location>
</feature>
<feature type="glycosylation site" description="N-linked (GlcNAc...) asparagine; by host" evidence="3">
    <location>
        <position position="239"/>
    </location>
</feature>
<feature type="glycosylation site" description="N-linked (GlcNAc...) asparagine; by host" evidence="3">
    <location>
        <position position="258"/>
    </location>
</feature>
<feature type="glycosylation site" description="N-linked (GlcNAc...) asparagine; by host" evidence="3">
    <location>
        <position position="269"/>
    </location>
</feature>
<feature type="disulfide bond" description="Interchain" evidence="1">
    <location>
        <position position="54"/>
    </location>
</feature>
<feature type="disulfide bond" evidence="1">
    <location>
        <begin position="109"/>
        <end position="136"/>
    </location>
</feature>
<feature type="disulfide bond" evidence="1">
    <location>
        <begin position="122"/>
        <end position="148"/>
    </location>
</feature>
<feature type="disulfide bond" description="Interchain" evidence="1">
    <location>
        <position position="307"/>
    </location>
</feature>
<evidence type="ECO:0000250" key="1"/>
<evidence type="ECO:0000250" key="2">
    <source>
        <dbReference type="UniProtKB" id="P60170"/>
    </source>
</evidence>
<evidence type="ECO:0000255" key="3"/>
<evidence type="ECO:0000305" key="4"/>
<gene>
    <name type="primary">GP</name>
</gene>
<dbReference type="EMBL" id="AB050936">
    <property type="protein sequence ID" value="BAB69007.1"/>
    <property type="molecule type" value="Genomic_RNA"/>
</dbReference>
<dbReference type="SMR" id="Q91DD7"/>
<dbReference type="GlyCosmos" id="Q91DD7">
    <property type="glycosylation" value="5 sites, No reported glycans"/>
</dbReference>
<dbReference type="Proteomes" id="UP000002322">
    <property type="component" value="Genome"/>
</dbReference>
<dbReference type="GO" id="GO:0005576">
    <property type="term" value="C:extracellular region"/>
    <property type="evidence" value="ECO:0007669"/>
    <property type="project" value="UniProtKB-SubCell"/>
</dbReference>
<dbReference type="GO" id="GO:0033644">
    <property type="term" value="C:host cell membrane"/>
    <property type="evidence" value="ECO:0007669"/>
    <property type="project" value="UniProtKB-KW"/>
</dbReference>
<dbReference type="GO" id="GO:0015267">
    <property type="term" value="F:channel activity"/>
    <property type="evidence" value="ECO:0007669"/>
    <property type="project" value="UniProtKB-KW"/>
</dbReference>
<dbReference type="GO" id="GO:0034220">
    <property type="term" value="P:monoatomic ion transmembrane transport"/>
    <property type="evidence" value="ECO:0007669"/>
    <property type="project" value="UniProtKB-KW"/>
</dbReference>
<dbReference type="InterPro" id="IPR014625">
    <property type="entry name" value="GPC_FiloV"/>
</dbReference>
<dbReference type="InterPro" id="IPR002561">
    <property type="entry name" value="GPC_filovir-type_extra_dom"/>
</dbReference>
<dbReference type="Pfam" id="PF01611">
    <property type="entry name" value="Filo_glycop"/>
    <property type="match status" value="1"/>
</dbReference>
<dbReference type="PIRSF" id="PIRSF036874">
    <property type="entry name" value="GPC_FiloV"/>
    <property type="match status" value="1"/>
</dbReference>
<reference key="1">
    <citation type="journal article" date="2001" name="Arch. Virol.">
        <title>Genome structure of Ebola virus subtype Reston: differences among Ebola subtypes.</title>
        <authorList>
            <person name="Ikegami T."/>
            <person name="Calaor A.B."/>
            <person name="Miranda M.E."/>
            <person name="Niikura M."/>
            <person name="Saijo M."/>
            <person name="Kurane I."/>
            <person name="Yoshikawa Y."/>
            <person name="Morikawa S."/>
        </authorList>
    </citation>
    <scope>NUCLEOTIDE SEQUENCE [GENOMIC RNA]</scope>
</reference>
<organismHost>
    <name type="scientific">Homo sapiens</name>
    <name type="common">Human</name>
    <dbReference type="NCBI Taxonomy" id="9606"/>
</organismHost>
<organismHost>
    <name type="scientific">Macaca fascicularis</name>
    <name type="common">Crab-eating macaque</name>
    <name type="synonym">Cynomolgus monkey</name>
    <dbReference type="NCBI Taxonomy" id="9541"/>
</organismHost>
<organismHost>
    <name type="scientific">Pteropodinae</name>
    <dbReference type="NCBI Taxonomy" id="77225"/>
</organismHost>
<organismHost>
    <name type="scientific">Sus scrofa</name>
    <name type="common">Pig</name>
    <dbReference type="NCBI Taxonomy" id="9823"/>
</organismHost>
<name>VSGP_EBORE</name>
<comment type="function">
    <molecule>Small/secreted glycoprotein</molecule>
    <text evidence="2">Seems to possess an anti-inflammatory activity as it can reverse the barrier-decreasing effects of TNF alpha. Might therefore contribute to the lack of inflammatory reaction seen during infection in spite the of extensive necrosis and massive virus production. Does not seem to be involved in activation of primary macrophages. Does not seem to interact specifically with neutrophils.</text>
</comment>
<comment type="function">
    <molecule>Delta-peptide</molecule>
    <text evidence="2">Viroporin that permeabilizes mammalian cell plasma membranes. It acts by altering permeation of ionic compounds and small molecules. This activity may lead to viral enterotoxic activity.</text>
</comment>
<comment type="subunit">
    <molecule>Small/secreted glycoprotein</molecule>
    <text evidence="2">Homodimer; disulfide-linked (By similarity). The homodimers are linked by two disulfide bonds in a parallel orientation (By similarity).</text>
</comment>
<comment type="subunit">
    <molecule>Delta-peptide</molecule>
    <text>Monomer.</text>
</comment>
<comment type="subcellular location">
    <molecule>Small/secreted glycoprotein</molecule>
    <subcellularLocation>
        <location evidence="2">Secreted</location>
    </subcellularLocation>
</comment>
<comment type="subcellular location">
    <molecule>Delta-peptide</molecule>
    <subcellularLocation>
        <location evidence="2">Secreted</location>
    </subcellularLocation>
</comment>
<comment type="PTM">
    <molecule>Pre-small/secreted glycoprotein</molecule>
    <text evidence="2">This precursor is processed into mature sGP and delta-peptide by host furin or furin-like proteases. The cleavage site corresponds to the furin optimal cleavage sequence [KR]-X-[KR]-R.</text>
</comment>
<comment type="PTM">
    <molecule>Small/secreted glycoprotein</molecule>
    <text evidence="2">N-glycosylated.</text>
</comment>
<comment type="PTM">
    <molecule>Delta-peptide</molecule>
    <text evidence="2">O-glycosylated.</text>
</comment>
<comment type="RNA editing">
    <location>
        <position position="296"/>
    </location>
    <text>Partially edited. RNA editing at this position consists of an insertion of one or two adenine nucleotides. The sequence displayed here is the small secreted glycoprotein, derived from the unedited RNA. The sequence derived from the +1A edited gives rise to the full-length transmembrane glycoprotein GP (AC Q91DD8), the +2A edited RNA gives rise to the super small secreted glycoprotein ssGP (AC P0C770).</text>
</comment>
<comment type="similarity">
    <text evidence="4">Belongs to the filoviruses glycoprotein family.</text>
</comment>
<protein>
    <recommendedName>
        <fullName>Pre-small/secreted glycoprotein</fullName>
        <shortName>pre-sGP</shortName>
    </recommendedName>
    <component>
        <recommendedName>
            <fullName>Small/secreted glycoprotein</fullName>
            <shortName>sGP</shortName>
        </recommendedName>
    </component>
    <component>
        <recommendedName>
            <fullName>Delta-peptide</fullName>
        </recommendedName>
    </component>
</protein>